<keyword id="KW-0028">Amino-acid biosynthesis</keyword>
<keyword id="KW-0963">Cytoplasm</keyword>
<keyword id="KW-0554">One-carbon metabolism</keyword>
<keyword id="KW-0663">Pyridoxal phosphate</keyword>
<keyword id="KW-0808">Transferase</keyword>
<comment type="function">
    <text evidence="1">Catalyzes the reversible interconversion of serine and glycine with tetrahydrofolate (THF) serving as the one-carbon carrier. This reaction serves as the major source of one-carbon groups required for the biosynthesis of purines, thymidylate, methionine, and other important biomolecules. Also exhibits THF-independent aldolase activity toward beta-hydroxyamino acids, producing glycine and aldehydes, via a retro-aldol mechanism.</text>
</comment>
<comment type="catalytic activity">
    <reaction evidence="1">
        <text>(6R)-5,10-methylene-5,6,7,8-tetrahydrofolate + glycine + H2O = (6S)-5,6,7,8-tetrahydrofolate + L-serine</text>
        <dbReference type="Rhea" id="RHEA:15481"/>
        <dbReference type="ChEBI" id="CHEBI:15377"/>
        <dbReference type="ChEBI" id="CHEBI:15636"/>
        <dbReference type="ChEBI" id="CHEBI:33384"/>
        <dbReference type="ChEBI" id="CHEBI:57305"/>
        <dbReference type="ChEBI" id="CHEBI:57453"/>
        <dbReference type="EC" id="2.1.2.1"/>
    </reaction>
</comment>
<comment type="cofactor">
    <cofactor evidence="1">
        <name>pyridoxal 5'-phosphate</name>
        <dbReference type="ChEBI" id="CHEBI:597326"/>
    </cofactor>
</comment>
<comment type="pathway">
    <text evidence="1">One-carbon metabolism; tetrahydrofolate interconversion.</text>
</comment>
<comment type="pathway">
    <text evidence="1">Amino-acid biosynthesis; glycine biosynthesis; glycine from L-serine: step 1/1.</text>
</comment>
<comment type="subunit">
    <text evidence="1">Homodimer.</text>
</comment>
<comment type="subcellular location">
    <subcellularLocation>
        <location evidence="1">Cytoplasm</location>
    </subcellularLocation>
</comment>
<comment type="similarity">
    <text evidence="1">Belongs to the SHMT family.</text>
</comment>
<proteinExistence type="inferred from homology"/>
<dbReference type="EC" id="2.1.2.1" evidence="1"/>
<dbReference type="EMBL" id="AM260525">
    <property type="protein sequence ID" value="CAK01682.1"/>
    <property type="molecule type" value="Genomic_DNA"/>
</dbReference>
<dbReference type="RefSeq" id="WP_012231864.1">
    <property type="nucleotide sequence ID" value="NC_010161.1"/>
</dbReference>
<dbReference type="SMR" id="A9IVC5"/>
<dbReference type="KEGG" id="btr:BT_1318"/>
<dbReference type="eggNOG" id="COG0112">
    <property type="taxonomic scope" value="Bacteria"/>
</dbReference>
<dbReference type="HOGENOM" id="CLU_022477_2_1_5"/>
<dbReference type="UniPathway" id="UPA00193"/>
<dbReference type="UniPathway" id="UPA00288">
    <property type="reaction ID" value="UER01023"/>
</dbReference>
<dbReference type="Proteomes" id="UP000001592">
    <property type="component" value="Chromosome"/>
</dbReference>
<dbReference type="GO" id="GO:0005829">
    <property type="term" value="C:cytosol"/>
    <property type="evidence" value="ECO:0007669"/>
    <property type="project" value="TreeGrafter"/>
</dbReference>
<dbReference type="GO" id="GO:0004372">
    <property type="term" value="F:glycine hydroxymethyltransferase activity"/>
    <property type="evidence" value="ECO:0007669"/>
    <property type="project" value="UniProtKB-UniRule"/>
</dbReference>
<dbReference type="GO" id="GO:0030170">
    <property type="term" value="F:pyridoxal phosphate binding"/>
    <property type="evidence" value="ECO:0007669"/>
    <property type="project" value="UniProtKB-UniRule"/>
</dbReference>
<dbReference type="GO" id="GO:0019264">
    <property type="term" value="P:glycine biosynthetic process from serine"/>
    <property type="evidence" value="ECO:0007669"/>
    <property type="project" value="UniProtKB-UniRule"/>
</dbReference>
<dbReference type="GO" id="GO:0035999">
    <property type="term" value="P:tetrahydrofolate interconversion"/>
    <property type="evidence" value="ECO:0007669"/>
    <property type="project" value="UniProtKB-UniRule"/>
</dbReference>
<dbReference type="CDD" id="cd00378">
    <property type="entry name" value="SHMT"/>
    <property type="match status" value="1"/>
</dbReference>
<dbReference type="FunFam" id="3.40.640.10:FF:000001">
    <property type="entry name" value="Serine hydroxymethyltransferase"/>
    <property type="match status" value="1"/>
</dbReference>
<dbReference type="Gene3D" id="3.90.1150.10">
    <property type="entry name" value="Aspartate Aminotransferase, domain 1"/>
    <property type="match status" value="1"/>
</dbReference>
<dbReference type="Gene3D" id="3.40.640.10">
    <property type="entry name" value="Type I PLP-dependent aspartate aminotransferase-like (Major domain)"/>
    <property type="match status" value="1"/>
</dbReference>
<dbReference type="HAMAP" id="MF_00051">
    <property type="entry name" value="SHMT"/>
    <property type="match status" value="1"/>
</dbReference>
<dbReference type="InterPro" id="IPR015424">
    <property type="entry name" value="PyrdxlP-dep_Trfase"/>
</dbReference>
<dbReference type="InterPro" id="IPR015421">
    <property type="entry name" value="PyrdxlP-dep_Trfase_major"/>
</dbReference>
<dbReference type="InterPro" id="IPR015422">
    <property type="entry name" value="PyrdxlP-dep_Trfase_small"/>
</dbReference>
<dbReference type="InterPro" id="IPR001085">
    <property type="entry name" value="Ser_HO-MeTrfase"/>
</dbReference>
<dbReference type="InterPro" id="IPR049943">
    <property type="entry name" value="Ser_HO-MeTrfase-like"/>
</dbReference>
<dbReference type="InterPro" id="IPR019798">
    <property type="entry name" value="Ser_HO-MeTrfase_PLP_BS"/>
</dbReference>
<dbReference type="InterPro" id="IPR039429">
    <property type="entry name" value="SHMT-like_dom"/>
</dbReference>
<dbReference type="NCBIfam" id="NF000586">
    <property type="entry name" value="PRK00011.1"/>
    <property type="match status" value="1"/>
</dbReference>
<dbReference type="PANTHER" id="PTHR11680">
    <property type="entry name" value="SERINE HYDROXYMETHYLTRANSFERASE"/>
    <property type="match status" value="1"/>
</dbReference>
<dbReference type="PANTHER" id="PTHR11680:SF35">
    <property type="entry name" value="SERINE HYDROXYMETHYLTRANSFERASE 1"/>
    <property type="match status" value="1"/>
</dbReference>
<dbReference type="Pfam" id="PF00464">
    <property type="entry name" value="SHMT"/>
    <property type="match status" value="1"/>
</dbReference>
<dbReference type="PIRSF" id="PIRSF000412">
    <property type="entry name" value="SHMT"/>
    <property type="match status" value="1"/>
</dbReference>
<dbReference type="SUPFAM" id="SSF53383">
    <property type="entry name" value="PLP-dependent transferases"/>
    <property type="match status" value="1"/>
</dbReference>
<dbReference type="PROSITE" id="PS00096">
    <property type="entry name" value="SHMT"/>
    <property type="match status" value="1"/>
</dbReference>
<organism>
    <name type="scientific">Bartonella tribocorum (strain CIP 105476 / IBS 506)</name>
    <dbReference type="NCBI Taxonomy" id="382640"/>
    <lineage>
        <taxon>Bacteria</taxon>
        <taxon>Pseudomonadati</taxon>
        <taxon>Pseudomonadota</taxon>
        <taxon>Alphaproteobacteria</taxon>
        <taxon>Hyphomicrobiales</taxon>
        <taxon>Bartonellaceae</taxon>
        <taxon>Bartonella</taxon>
    </lineage>
</organism>
<gene>
    <name evidence="1" type="primary">glyA</name>
    <name type="ordered locus">BT_1318</name>
</gene>
<reference key="1">
    <citation type="journal article" date="2007" name="Nat. Genet.">
        <title>Genomic analysis of Bartonella identifies type IV secretion systems as host adaptability factors.</title>
        <authorList>
            <person name="Saenz H.L."/>
            <person name="Engel P."/>
            <person name="Stoeckli M.C."/>
            <person name="Lanz C."/>
            <person name="Raddatz G."/>
            <person name="Vayssier-Taussat M."/>
            <person name="Birtles R."/>
            <person name="Schuster S.C."/>
            <person name="Dehio C."/>
        </authorList>
    </citation>
    <scope>NUCLEOTIDE SEQUENCE [LARGE SCALE GENOMIC DNA]</scope>
    <source>
        <strain>CIP 105476 / IBS 506</strain>
    </source>
</reference>
<evidence type="ECO:0000255" key="1">
    <source>
        <dbReference type="HAMAP-Rule" id="MF_00051"/>
    </source>
</evidence>
<accession>A9IVC5</accession>
<feature type="chain" id="PRO_1000074887" description="Serine hydroxymethyltransferase">
    <location>
        <begin position="1"/>
        <end position="437"/>
    </location>
</feature>
<feature type="binding site" evidence="1">
    <location>
        <position position="130"/>
    </location>
    <ligand>
        <name>(6S)-5,6,7,8-tetrahydrofolate</name>
        <dbReference type="ChEBI" id="CHEBI:57453"/>
    </ligand>
</feature>
<feature type="binding site" evidence="1">
    <location>
        <begin position="134"/>
        <end position="136"/>
    </location>
    <ligand>
        <name>(6S)-5,6,7,8-tetrahydrofolate</name>
        <dbReference type="ChEBI" id="CHEBI:57453"/>
    </ligand>
</feature>
<feature type="site" description="Plays an important role in substrate specificity" evidence="1">
    <location>
        <position position="238"/>
    </location>
</feature>
<feature type="modified residue" description="N6-(pyridoxal phosphate)lysine" evidence="1">
    <location>
        <position position="239"/>
    </location>
</feature>
<protein>
    <recommendedName>
        <fullName evidence="1">Serine hydroxymethyltransferase</fullName>
        <shortName evidence="1">SHMT</shortName>
        <shortName evidence="1">Serine methylase</shortName>
        <ecNumber evidence="1">2.1.2.1</ecNumber>
    </recommendedName>
</protein>
<sequence length="437" mass="47902">MTQQENDTQKRFFNDNLQIVDDAIFNAMRGEFERQQHEIELIASENIVSRAVLEAQGSVLTNKYAEGYPRKRYYGGCQFVDLVEDLAIERAKQLFGAAFANVQPNSGSQMNQAVFLALLQPGDTFMGLDLNAGGHLTHGSSVNMSGKWFDVVSYGVRQEDQIIDMDEVERLAKERKPKLIIAGGSSYPRFWDWERFREIADEIGAHLLVDMSHIAGLVAGGVHPSPVPHAHIVTTTTHKSLRGPRGGLILTNDEALSKKINSAIFPGLQGGPLMHVIAAKAVAFGEALHPSFKSYSVNVVANAKTLAKTLQSNGFNIVSGGTDNHLLLVDLRSKNLTGKRAELALGRAHITCNKNGIPFDPETPSITSGIRLGSPAATTRGFLEKEFVQVAHLIAEVLDGLRNAKSDEDNHAVEMAVKKKVEDITNQFPLYSYLSTR</sequence>
<name>GLYA_BART1</name>